<reference key="1">
    <citation type="journal article" date="2007" name="Nat. Biotechnol.">
        <title>Complete genome sequence of the myxobacterium Sorangium cellulosum.</title>
        <authorList>
            <person name="Schneiker S."/>
            <person name="Perlova O."/>
            <person name="Kaiser O."/>
            <person name="Gerth K."/>
            <person name="Alici A."/>
            <person name="Altmeyer M.O."/>
            <person name="Bartels D."/>
            <person name="Bekel T."/>
            <person name="Beyer S."/>
            <person name="Bode E."/>
            <person name="Bode H.B."/>
            <person name="Bolten C.J."/>
            <person name="Choudhuri J.V."/>
            <person name="Doss S."/>
            <person name="Elnakady Y.A."/>
            <person name="Frank B."/>
            <person name="Gaigalat L."/>
            <person name="Goesmann A."/>
            <person name="Groeger C."/>
            <person name="Gross F."/>
            <person name="Jelsbak L."/>
            <person name="Jelsbak L."/>
            <person name="Kalinowski J."/>
            <person name="Kegler C."/>
            <person name="Knauber T."/>
            <person name="Konietzny S."/>
            <person name="Kopp M."/>
            <person name="Krause L."/>
            <person name="Krug D."/>
            <person name="Linke B."/>
            <person name="Mahmud T."/>
            <person name="Martinez-Arias R."/>
            <person name="McHardy A.C."/>
            <person name="Merai M."/>
            <person name="Meyer F."/>
            <person name="Mormann S."/>
            <person name="Munoz-Dorado J."/>
            <person name="Perez J."/>
            <person name="Pradella S."/>
            <person name="Rachid S."/>
            <person name="Raddatz G."/>
            <person name="Rosenau F."/>
            <person name="Rueckert C."/>
            <person name="Sasse F."/>
            <person name="Scharfe M."/>
            <person name="Schuster S.C."/>
            <person name="Suen G."/>
            <person name="Treuner-Lange A."/>
            <person name="Velicer G.J."/>
            <person name="Vorholter F.-J."/>
            <person name="Weissman K.J."/>
            <person name="Welch R.D."/>
            <person name="Wenzel S.C."/>
            <person name="Whitworth D.E."/>
            <person name="Wilhelm S."/>
            <person name="Wittmann C."/>
            <person name="Bloecker H."/>
            <person name="Puehler A."/>
            <person name="Mueller R."/>
        </authorList>
    </citation>
    <scope>NUCLEOTIDE SEQUENCE [LARGE SCALE GENOMIC DNA]</scope>
    <source>
        <strain>So ce56</strain>
    </source>
</reference>
<accession>A9GS95</accession>
<feature type="chain" id="PRO_0000337705" description="Putative glutamate--cysteine ligase 2">
    <location>
        <begin position="1"/>
        <end position="375"/>
    </location>
</feature>
<comment type="function">
    <text evidence="1">ATP-dependent carboxylate-amine ligase which exhibits weak glutamate--cysteine ligase activity.</text>
</comment>
<comment type="catalytic activity">
    <reaction evidence="1">
        <text>L-cysteine + L-glutamate + ATP = gamma-L-glutamyl-L-cysteine + ADP + phosphate + H(+)</text>
        <dbReference type="Rhea" id="RHEA:13285"/>
        <dbReference type="ChEBI" id="CHEBI:15378"/>
        <dbReference type="ChEBI" id="CHEBI:29985"/>
        <dbReference type="ChEBI" id="CHEBI:30616"/>
        <dbReference type="ChEBI" id="CHEBI:35235"/>
        <dbReference type="ChEBI" id="CHEBI:43474"/>
        <dbReference type="ChEBI" id="CHEBI:58173"/>
        <dbReference type="ChEBI" id="CHEBI:456216"/>
        <dbReference type="EC" id="6.3.2.2"/>
    </reaction>
</comment>
<comment type="similarity">
    <text evidence="1">Belongs to the glutamate--cysteine ligase type 2 family. YbdK subfamily.</text>
</comment>
<dbReference type="EC" id="6.3.2.2" evidence="1"/>
<dbReference type="EMBL" id="AM746676">
    <property type="protein sequence ID" value="CAN93747.1"/>
    <property type="molecule type" value="Genomic_DNA"/>
</dbReference>
<dbReference type="RefSeq" id="WP_012236217.1">
    <property type="nucleotide sequence ID" value="NC_010162.1"/>
</dbReference>
<dbReference type="SMR" id="A9GS95"/>
<dbReference type="STRING" id="448385.sce3587"/>
<dbReference type="KEGG" id="scl:sce3587"/>
<dbReference type="eggNOG" id="COG2170">
    <property type="taxonomic scope" value="Bacteria"/>
</dbReference>
<dbReference type="HOGENOM" id="CLU_044848_1_0_7"/>
<dbReference type="OrthoDB" id="9769628at2"/>
<dbReference type="BioCyc" id="SCEL448385:SCE_RS18370-MONOMER"/>
<dbReference type="Proteomes" id="UP000002139">
    <property type="component" value="Chromosome"/>
</dbReference>
<dbReference type="GO" id="GO:0005524">
    <property type="term" value="F:ATP binding"/>
    <property type="evidence" value="ECO:0007669"/>
    <property type="project" value="UniProtKB-KW"/>
</dbReference>
<dbReference type="GO" id="GO:0004357">
    <property type="term" value="F:glutamate-cysteine ligase activity"/>
    <property type="evidence" value="ECO:0007669"/>
    <property type="project" value="UniProtKB-EC"/>
</dbReference>
<dbReference type="GO" id="GO:0042398">
    <property type="term" value="P:modified amino acid biosynthetic process"/>
    <property type="evidence" value="ECO:0007669"/>
    <property type="project" value="InterPro"/>
</dbReference>
<dbReference type="Gene3D" id="3.30.590.20">
    <property type="match status" value="1"/>
</dbReference>
<dbReference type="HAMAP" id="MF_01609">
    <property type="entry name" value="Glu_cys_ligase_2"/>
    <property type="match status" value="1"/>
</dbReference>
<dbReference type="InterPro" id="IPR050141">
    <property type="entry name" value="GCL_type2/YbdK_subfam"/>
</dbReference>
<dbReference type="InterPro" id="IPR006336">
    <property type="entry name" value="GCS2"/>
</dbReference>
<dbReference type="InterPro" id="IPR014746">
    <property type="entry name" value="Gln_synth/guanido_kin_cat_dom"/>
</dbReference>
<dbReference type="InterPro" id="IPR011793">
    <property type="entry name" value="YbdK"/>
</dbReference>
<dbReference type="NCBIfam" id="TIGR02050">
    <property type="entry name" value="gshA_cyan_rel"/>
    <property type="match status" value="1"/>
</dbReference>
<dbReference type="NCBIfam" id="NF010039">
    <property type="entry name" value="PRK13515.1"/>
    <property type="match status" value="1"/>
</dbReference>
<dbReference type="PANTHER" id="PTHR36510">
    <property type="entry name" value="GLUTAMATE--CYSTEINE LIGASE 2-RELATED"/>
    <property type="match status" value="1"/>
</dbReference>
<dbReference type="PANTHER" id="PTHR36510:SF1">
    <property type="entry name" value="GLUTAMATE--CYSTEINE LIGASE 2-RELATED"/>
    <property type="match status" value="1"/>
</dbReference>
<dbReference type="Pfam" id="PF04107">
    <property type="entry name" value="GCS2"/>
    <property type="match status" value="1"/>
</dbReference>
<dbReference type="SUPFAM" id="SSF55931">
    <property type="entry name" value="Glutamine synthetase/guanido kinase"/>
    <property type="match status" value="1"/>
</dbReference>
<name>GCS2_SORC5</name>
<protein>
    <recommendedName>
        <fullName evidence="1">Putative glutamate--cysteine ligase 2</fullName>
        <ecNumber evidence="1">6.3.2.2</ecNumber>
    </recommendedName>
    <alternativeName>
        <fullName evidence="1">Gamma-glutamylcysteine synthetase 2</fullName>
        <shortName evidence="1">GCS 2</shortName>
        <shortName evidence="1">Gamma-GCS 2</shortName>
    </alternativeName>
</protein>
<sequence length="375" mass="42709">MTDVEGLLDGQFTLGIEEEFQIVDAETRELRSYVSQLLEGGPGHELLRGRARPEMHQSVVETGTGVCRDIRQARGELVELRGSLNALARRGGMRIVAAGTHPFSDWKKQDITDGERYRCIVEDLQDVARANLIFGLHVHVGVKDREVAMALANQVRYFLPHILALSTSSPFWLGRPSGLKSTRSEIFKRFPRTGIPGLFESHGHFQRFVDLLVKTGCIDNAKKIWWDVRPHPFFDTVEVRICDMTTRLDDTVALAALVQAVMGKLYLLYRRNLGFREYRQELIEENKWRAVRYGLDGQLIDFGKQEQVPVRHLVGELLEFVQESAEIFGSQRELERVRRILHEGTSADRQLAVYARTKSFHAVVDDLIEQSSLGL</sequence>
<organism>
    <name type="scientific">Sorangium cellulosum (strain So ce56)</name>
    <name type="common">Polyangium cellulosum (strain So ce56)</name>
    <dbReference type="NCBI Taxonomy" id="448385"/>
    <lineage>
        <taxon>Bacteria</taxon>
        <taxon>Pseudomonadati</taxon>
        <taxon>Myxococcota</taxon>
        <taxon>Polyangia</taxon>
        <taxon>Polyangiales</taxon>
        <taxon>Polyangiaceae</taxon>
        <taxon>Sorangium</taxon>
    </lineage>
</organism>
<keyword id="KW-0067">ATP-binding</keyword>
<keyword id="KW-0436">Ligase</keyword>
<keyword id="KW-0547">Nucleotide-binding</keyword>
<keyword id="KW-1185">Reference proteome</keyword>
<evidence type="ECO:0000255" key="1">
    <source>
        <dbReference type="HAMAP-Rule" id="MF_01609"/>
    </source>
</evidence>
<gene>
    <name type="ordered locus">sce3587</name>
</gene>
<proteinExistence type="inferred from homology"/>